<sequence>MPVADTSQLISGVAERYASSLFELALEAGSIEAVGADLTRIQALIDGSADLKRLIVSPVFSADDQYKAISALVEKFGVSGLVGNFLKVVARNRRLFVLPGIIRAFRLLAARHKGEITADVTSAHALTPAQETELKAALKGVTGKDVAVNVTVDPSILGGLIVKVGSRQIDTSLRTKLSTLKLALKEVG</sequence>
<dbReference type="EMBL" id="CP000738">
    <property type="protein sequence ID" value="ABR61754.1"/>
    <property type="molecule type" value="Genomic_DNA"/>
</dbReference>
<dbReference type="RefSeq" id="WP_012067136.1">
    <property type="nucleotide sequence ID" value="NC_009636.1"/>
</dbReference>
<dbReference type="RefSeq" id="YP_001328589.1">
    <property type="nucleotide sequence ID" value="NC_009636.1"/>
</dbReference>
<dbReference type="SMR" id="A6UDM4"/>
<dbReference type="STRING" id="366394.Smed_2925"/>
<dbReference type="KEGG" id="smd:Smed_2925"/>
<dbReference type="PATRIC" id="fig|366394.8.peg.6142"/>
<dbReference type="eggNOG" id="COG0712">
    <property type="taxonomic scope" value="Bacteria"/>
</dbReference>
<dbReference type="HOGENOM" id="CLU_085114_0_1_5"/>
<dbReference type="OrthoDB" id="9796185at2"/>
<dbReference type="Proteomes" id="UP000001108">
    <property type="component" value="Chromosome"/>
</dbReference>
<dbReference type="GO" id="GO:0005886">
    <property type="term" value="C:plasma membrane"/>
    <property type="evidence" value="ECO:0007669"/>
    <property type="project" value="UniProtKB-SubCell"/>
</dbReference>
<dbReference type="GO" id="GO:0045259">
    <property type="term" value="C:proton-transporting ATP synthase complex"/>
    <property type="evidence" value="ECO:0007669"/>
    <property type="project" value="UniProtKB-KW"/>
</dbReference>
<dbReference type="GO" id="GO:0046933">
    <property type="term" value="F:proton-transporting ATP synthase activity, rotational mechanism"/>
    <property type="evidence" value="ECO:0007669"/>
    <property type="project" value="UniProtKB-UniRule"/>
</dbReference>
<dbReference type="Gene3D" id="1.10.520.20">
    <property type="entry name" value="N-terminal domain of the delta subunit of the F1F0-ATP synthase"/>
    <property type="match status" value="1"/>
</dbReference>
<dbReference type="HAMAP" id="MF_01416">
    <property type="entry name" value="ATP_synth_delta_bact"/>
    <property type="match status" value="1"/>
</dbReference>
<dbReference type="InterPro" id="IPR026015">
    <property type="entry name" value="ATP_synth_OSCP/delta_N_sf"/>
</dbReference>
<dbReference type="InterPro" id="IPR020781">
    <property type="entry name" value="ATPase_OSCP/d_CS"/>
</dbReference>
<dbReference type="InterPro" id="IPR000711">
    <property type="entry name" value="ATPase_OSCP/dsu"/>
</dbReference>
<dbReference type="NCBIfam" id="TIGR01145">
    <property type="entry name" value="ATP_synt_delta"/>
    <property type="match status" value="1"/>
</dbReference>
<dbReference type="NCBIfam" id="NF004406">
    <property type="entry name" value="PRK05758.3-2"/>
    <property type="match status" value="1"/>
</dbReference>
<dbReference type="PANTHER" id="PTHR11910">
    <property type="entry name" value="ATP SYNTHASE DELTA CHAIN"/>
    <property type="match status" value="1"/>
</dbReference>
<dbReference type="Pfam" id="PF00213">
    <property type="entry name" value="OSCP"/>
    <property type="match status" value="1"/>
</dbReference>
<dbReference type="PRINTS" id="PR00125">
    <property type="entry name" value="ATPASEDELTA"/>
</dbReference>
<dbReference type="SUPFAM" id="SSF47928">
    <property type="entry name" value="N-terminal domain of the delta subunit of the F1F0-ATP synthase"/>
    <property type="match status" value="1"/>
</dbReference>
<dbReference type="PROSITE" id="PS00389">
    <property type="entry name" value="ATPASE_DELTA"/>
    <property type="match status" value="1"/>
</dbReference>
<feature type="chain" id="PRO_0000371145" description="ATP synthase subunit delta">
    <location>
        <begin position="1"/>
        <end position="188"/>
    </location>
</feature>
<organism>
    <name type="scientific">Sinorhizobium medicae (strain WSM419)</name>
    <name type="common">Ensifer medicae</name>
    <dbReference type="NCBI Taxonomy" id="366394"/>
    <lineage>
        <taxon>Bacteria</taxon>
        <taxon>Pseudomonadati</taxon>
        <taxon>Pseudomonadota</taxon>
        <taxon>Alphaproteobacteria</taxon>
        <taxon>Hyphomicrobiales</taxon>
        <taxon>Rhizobiaceae</taxon>
        <taxon>Sinorhizobium/Ensifer group</taxon>
        <taxon>Sinorhizobium</taxon>
    </lineage>
</organism>
<proteinExistence type="inferred from homology"/>
<comment type="function">
    <text evidence="1">F(1)F(0) ATP synthase produces ATP from ADP in the presence of a proton or sodium gradient. F-type ATPases consist of two structural domains, F(1) containing the extramembraneous catalytic core and F(0) containing the membrane proton channel, linked together by a central stalk and a peripheral stalk. During catalysis, ATP synthesis in the catalytic domain of F(1) is coupled via a rotary mechanism of the central stalk subunits to proton translocation.</text>
</comment>
<comment type="function">
    <text evidence="1">This protein is part of the stalk that links CF(0) to CF(1). It either transmits conformational changes from CF(0) to CF(1) or is implicated in proton conduction.</text>
</comment>
<comment type="subunit">
    <text evidence="1">F-type ATPases have 2 components, F(1) - the catalytic core - and F(0) - the membrane proton channel. F(1) has five subunits: alpha(3), beta(3), gamma(1), delta(1), epsilon(1). F(0) has three main subunits: a(1), b(2) and c(10-14). The alpha and beta chains form an alternating ring which encloses part of the gamma chain. F(1) is attached to F(0) by a central stalk formed by the gamma and epsilon chains, while a peripheral stalk is formed by the delta and b chains.</text>
</comment>
<comment type="subcellular location">
    <subcellularLocation>
        <location evidence="1">Cell inner membrane</location>
        <topology evidence="1">Peripheral membrane protein</topology>
    </subcellularLocation>
</comment>
<comment type="similarity">
    <text evidence="1">Belongs to the ATPase delta chain family.</text>
</comment>
<reference key="1">
    <citation type="submission" date="2007-06" db="EMBL/GenBank/DDBJ databases">
        <title>Complete sequence of Sinorhizobium medicae WSM419 chromosome.</title>
        <authorList>
            <consortium name="US DOE Joint Genome Institute"/>
            <person name="Copeland A."/>
            <person name="Lucas S."/>
            <person name="Lapidus A."/>
            <person name="Barry K."/>
            <person name="Glavina del Rio T."/>
            <person name="Dalin E."/>
            <person name="Tice H."/>
            <person name="Pitluck S."/>
            <person name="Chain P."/>
            <person name="Malfatti S."/>
            <person name="Shin M."/>
            <person name="Vergez L."/>
            <person name="Schmutz J."/>
            <person name="Larimer F."/>
            <person name="Land M."/>
            <person name="Hauser L."/>
            <person name="Kyrpides N."/>
            <person name="Mikhailova N."/>
            <person name="Reeve W.G."/>
            <person name="Richardson P."/>
        </authorList>
    </citation>
    <scope>NUCLEOTIDE SEQUENCE [LARGE SCALE GENOMIC DNA]</scope>
    <source>
        <strain>WSM419</strain>
    </source>
</reference>
<accession>A6UDM4</accession>
<protein>
    <recommendedName>
        <fullName evidence="1">ATP synthase subunit delta</fullName>
    </recommendedName>
    <alternativeName>
        <fullName evidence="1">ATP synthase F(1) sector subunit delta</fullName>
    </alternativeName>
    <alternativeName>
        <fullName evidence="1">F-type ATPase subunit delta</fullName>
        <shortName evidence="1">F-ATPase subunit delta</shortName>
    </alternativeName>
</protein>
<evidence type="ECO:0000255" key="1">
    <source>
        <dbReference type="HAMAP-Rule" id="MF_01416"/>
    </source>
</evidence>
<name>ATPD_SINMW</name>
<gene>
    <name evidence="1" type="primary">atpH</name>
    <name type="ordered locus">Smed_2925</name>
</gene>
<keyword id="KW-0066">ATP synthesis</keyword>
<keyword id="KW-0997">Cell inner membrane</keyword>
<keyword id="KW-1003">Cell membrane</keyword>
<keyword id="KW-0139">CF(1)</keyword>
<keyword id="KW-0375">Hydrogen ion transport</keyword>
<keyword id="KW-0406">Ion transport</keyword>
<keyword id="KW-0472">Membrane</keyword>
<keyword id="KW-0813">Transport</keyword>